<sequence>MAINNQRIRIRLKAFDHKLIDISTQEIVDTAKKTGAQVKGPIPLPVRKEKFTILISPHVNKKARDQYEIRTHKRLIDIVEPTDKTVDALMKLDLASGVDVQISLS</sequence>
<comment type="function">
    <text evidence="1">Involved in the binding of tRNA to the ribosomes.</text>
</comment>
<comment type="subunit">
    <text evidence="1">Part of the 30S ribosomal subunit.</text>
</comment>
<comment type="similarity">
    <text evidence="1">Belongs to the universal ribosomal protein uS10 family.</text>
</comment>
<name>RS10_FRATF</name>
<reference key="1">
    <citation type="journal article" date="2009" name="PLoS ONE">
        <title>Complete genome sequence of Francisella tularensis subspecies holarctica FTNF002-00.</title>
        <authorList>
            <person name="Barabote R.D."/>
            <person name="Xie G."/>
            <person name="Brettin T.S."/>
            <person name="Hinrichs S.H."/>
            <person name="Fey P.D."/>
            <person name="Jay J.J."/>
            <person name="Engle J.L."/>
            <person name="Godbole S.D."/>
            <person name="Noronha J.M."/>
            <person name="Scheuermann R.H."/>
            <person name="Zhou L.W."/>
            <person name="Lion C."/>
            <person name="Dempsey M.P."/>
        </authorList>
    </citation>
    <scope>NUCLEOTIDE SEQUENCE [LARGE SCALE GENOMIC DNA]</scope>
    <source>
        <strain>FTNF002-00 / FTA</strain>
    </source>
</reference>
<dbReference type="EMBL" id="CP000803">
    <property type="protein sequence ID" value="ABU60728.1"/>
    <property type="molecule type" value="Genomic_DNA"/>
</dbReference>
<dbReference type="SMR" id="A7N9S5"/>
<dbReference type="KEGG" id="fta:FTA_0251"/>
<dbReference type="HOGENOM" id="CLU_122625_1_3_6"/>
<dbReference type="GO" id="GO:1990904">
    <property type="term" value="C:ribonucleoprotein complex"/>
    <property type="evidence" value="ECO:0007669"/>
    <property type="project" value="UniProtKB-KW"/>
</dbReference>
<dbReference type="GO" id="GO:0005840">
    <property type="term" value="C:ribosome"/>
    <property type="evidence" value="ECO:0007669"/>
    <property type="project" value="UniProtKB-KW"/>
</dbReference>
<dbReference type="GO" id="GO:0003735">
    <property type="term" value="F:structural constituent of ribosome"/>
    <property type="evidence" value="ECO:0007669"/>
    <property type="project" value="InterPro"/>
</dbReference>
<dbReference type="GO" id="GO:0000049">
    <property type="term" value="F:tRNA binding"/>
    <property type="evidence" value="ECO:0007669"/>
    <property type="project" value="UniProtKB-UniRule"/>
</dbReference>
<dbReference type="GO" id="GO:0006412">
    <property type="term" value="P:translation"/>
    <property type="evidence" value="ECO:0007669"/>
    <property type="project" value="UniProtKB-UniRule"/>
</dbReference>
<dbReference type="FunFam" id="3.30.70.600:FF:000001">
    <property type="entry name" value="30S ribosomal protein S10"/>
    <property type="match status" value="1"/>
</dbReference>
<dbReference type="Gene3D" id="3.30.70.600">
    <property type="entry name" value="Ribosomal protein S10 domain"/>
    <property type="match status" value="1"/>
</dbReference>
<dbReference type="HAMAP" id="MF_00508">
    <property type="entry name" value="Ribosomal_uS10"/>
    <property type="match status" value="1"/>
</dbReference>
<dbReference type="InterPro" id="IPR001848">
    <property type="entry name" value="Ribosomal_uS10"/>
</dbReference>
<dbReference type="InterPro" id="IPR027486">
    <property type="entry name" value="Ribosomal_uS10_dom"/>
</dbReference>
<dbReference type="InterPro" id="IPR036838">
    <property type="entry name" value="Ribosomal_uS10_dom_sf"/>
</dbReference>
<dbReference type="NCBIfam" id="NF001861">
    <property type="entry name" value="PRK00596.1"/>
    <property type="match status" value="1"/>
</dbReference>
<dbReference type="NCBIfam" id="TIGR01049">
    <property type="entry name" value="rpsJ_bact"/>
    <property type="match status" value="1"/>
</dbReference>
<dbReference type="PANTHER" id="PTHR11700">
    <property type="entry name" value="30S RIBOSOMAL PROTEIN S10 FAMILY MEMBER"/>
    <property type="match status" value="1"/>
</dbReference>
<dbReference type="Pfam" id="PF00338">
    <property type="entry name" value="Ribosomal_S10"/>
    <property type="match status" value="1"/>
</dbReference>
<dbReference type="PRINTS" id="PR00971">
    <property type="entry name" value="RIBOSOMALS10"/>
</dbReference>
<dbReference type="SMART" id="SM01403">
    <property type="entry name" value="Ribosomal_S10"/>
    <property type="match status" value="1"/>
</dbReference>
<dbReference type="SUPFAM" id="SSF54999">
    <property type="entry name" value="Ribosomal protein S10"/>
    <property type="match status" value="1"/>
</dbReference>
<organism>
    <name type="scientific">Francisella tularensis subsp. holarctica (strain FTNF002-00 / FTA)</name>
    <dbReference type="NCBI Taxonomy" id="458234"/>
    <lineage>
        <taxon>Bacteria</taxon>
        <taxon>Pseudomonadati</taxon>
        <taxon>Pseudomonadota</taxon>
        <taxon>Gammaproteobacteria</taxon>
        <taxon>Thiotrichales</taxon>
        <taxon>Francisellaceae</taxon>
        <taxon>Francisella</taxon>
    </lineage>
</organism>
<accession>A7N9S5</accession>
<proteinExistence type="inferred from homology"/>
<gene>
    <name evidence="1" type="primary">rpsJ</name>
    <name type="ordered locus">FTA_0251</name>
</gene>
<protein>
    <recommendedName>
        <fullName evidence="1">Small ribosomal subunit protein uS10</fullName>
    </recommendedName>
    <alternativeName>
        <fullName evidence="2">30S ribosomal protein S10</fullName>
    </alternativeName>
</protein>
<feature type="chain" id="PRO_1000015023" description="Small ribosomal subunit protein uS10">
    <location>
        <begin position="1"/>
        <end position="105"/>
    </location>
</feature>
<keyword id="KW-0687">Ribonucleoprotein</keyword>
<keyword id="KW-0689">Ribosomal protein</keyword>
<evidence type="ECO:0000255" key="1">
    <source>
        <dbReference type="HAMAP-Rule" id="MF_00508"/>
    </source>
</evidence>
<evidence type="ECO:0000305" key="2"/>